<organism>
    <name type="scientific">Pseudomonas syringae pv. syringae (strain B728a)</name>
    <dbReference type="NCBI Taxonomy" id="205918"/>
    <lineage>
        <taxon>Bacteria</taxon>
        <taxon>Pseudomonadati</taxon>
        <taxon>Pseudomonadota</taxon>
        <taxon>Gammaproteobacteria</taxon>
        <taxon>Pseudomonadales</taxon>
        <taxon>Pseudomonadaceae</taxon>
        <taxon>Pseudomonas</taxon>
        <taxon>Pseudomonas syringae</taxon>
    </lineage>
</organism>
<evidence type="ECO:0000255" key="1">
    <source>
        <dbReference type="HAMAP-Rule" id="MF_00074"/>
    </source>
</evidence>
<comment type="function">
    <text evidence="1">Specifically methylates the N7 position of guanine in position 527 of 16S rRNA.</text>
</comment>
<comment type="catalytic activity">
    <reaction evidence="1">
        <text>guanosine(527) in 16S rRNA + S-adenosyl-L-methionine = N(7)-methylguanosine(527) in 16S rRNA + S-adenosyl-L-homocysteine</text>
        <dbReference type="Rhea" id="RHEA:42732"/>
        <dbReference type="Rhea" id="RHEA-COMP:10209"/>
        <dbReference type="Rhea" id="RHEA-COMP:10210"/>
        <dbReference type="ChEBI" id="CHEBI:57856"/>
        <dbReference type="ChEBI" id="CHEBI:59789"/>
        <dbReference type="ChEBI" id="CHEBI:74269"/>
        <dbReference type="ChEBI" id="CHEBI:74480"/>
        <dbReference type="EC" id="2.1.1.170"/>
    </reaction>
</comment>
<comment type="subcellular location">
    <subcellularLocation>
        <location evidence="1">Cytoplasm</location>
    </subcellularLocation>
</comment>
<comment type="similarity">
    <text evidence="1">Belongs to the methyltransferase superfamily. RNA methyltransferase RsmG family.</text>
</comment>
<name>RSMG_PSEU2</name>
<sequence>MSSMVTPQHAQELSTGARELGIDLSPAQHEQLLAYLALLIKWNKAYNLTAVRNPDEMVSRHLLDSLSVVPFIEGTRWIDVGSGGGMPGIPMAILFPERKVALLDSNGKKTRFQTQVKLELKLDNLEVIHSRAESYQPEVPFDGIISRAFSSLEDFTGWTRHMGDVNTRWLAMKGLHPDDELVALPSDFHLDSAHALTVPGCQGQRHLLILRRTA</sequence>
<keyword id="KW-0963">Cytoplasm</keyword>
<keyword id="KW-0489">Methyltransferase</keyword>
<keyword id="KW-0698">rRNA processing</keyword>
<keyword id="KW-0949">S-adenosyl-L-methionine</keyword>
<keyword id="KW-0808">Transferase</keyword>
<dbReference type="EC" id="2.1.1.170" evidence="1"/>
<dbReference type="EMBL" id="CP000075">
    <property type="protein sequence ID" value="AAY40158.1"/>
    <property type="molecule type" value="Genomic_DNA"/>
</dbReference>
<dbReference type="RefSeq" id="WP_003367844.1">
    <property type="nucleotide sequence ID" value="NC_007005.1"/>
</dbReference>
<dbReference type="RefSeq" id="YP_238196.1">
    <property type="nucleotide sequence ID" value="NC_007005.1"/>
</dbReference>
<dbReference type="SMR" id="Q4ZL14"/>
<dbReference type="STRING" id="205918.Psyr_5131"/>
<dbReference type="GeneID" id="77281010"/>
<dbReference type="KEGG" id="psb:Psyr_5131"/>
<dbReference type="PATRIC" id="fig|205918.7.peg.5292"/>
<dbReference type="eggNOG" id="COG0357">
    <property type="taxonomic scope" value="Bacteria"/>
</dbReference>
<dbReference type="HOGENOM" id="CLU_065341_2_0_6"/>
<dbReference type="OrthoDB" id="9808773at2"/>
<dbReference type="Proteomes" id="UP000000426">
    <property type="component" value="Chromosome"/>
</dbReference>
<dbReference type="GO" id="GO:0005829">
    <property type="term" value="C:cytosol"/>
    <property type="evidence" value="ECO:0007669"/>
    <property type="project" value="TreeGrafter"/>
</dbReference>
<dbReference type="GO" id="GO:0070043">
    <property type="term" value="F:rRNA (guanine-N7-)-methyltransferase activity"/>
    <property type="evidence" value="ECO:0007669"/>
    <property type="project" value="UniProtKB-UniRule"/>
</dbReference>
<dbReference type="CDD" id="cd02440">
    <property type="entry name" value="AdoMet_MTases"/>
    <property type="match status" value="1"/>
</dbReference>
<dbReference type="Gene3D" id="3.40.50.150">
    <property type="entry name" value="Vaccinia Virus protein VP39"/>
    <property type="match status" value="1"/>
</dbReference>
<dbReference type="HAMAP" id="MF_00074">
    <property type="entry name" value="16SrRNA_methyltr_G"/>
    <property type="match status" value="1"/>
</dbReference>
<dbReference type="InterPro" id="IPR003682">
    <property type="entry name" value="rRNA_ssu_MeTfrase_G"/>
</dbReference>
<dbReference type="InterPro" id="IPR029063">
    <property type="entry name" value="SAM-dependent_MTases_sf"/>
</dbReference>
<dbReference type="NCBIfam" id="TIGR00138">
    <property type="entry name" value="rsmG_gidB"/>
    <property type="match status" value="1"/>
</dbReference>
<dbReference type="PANTHER" id="PTHR31760">
    <property type="entry name" value="S-ADENOSYL-L-METHIONINE-DEPENDENT METHYLTRANSFERASES SUPERFAMILY PROTEIN"/>
    <property type="match status" value="1"/>
</dbReference>
<dbReference type="PANTHER" id="PTHR31760:SF0">
    <property type="entry name" value="S-ADENOSYL-L-METHIONINE-DEPENDENT METHYLTRANSFERASES SUPERFAMILY PROTEIN"/>
    <property type="match status" value="1"/>
</dbReference>
<dbReference type="Pfam" id="PF02527">
    <property type="entry name" value="GidB"/>
    <property type="match status" value="1"/>
</dbReference>
<dbReference type="PIRSF" id="PIRSF003078">
    <property type="entry name" value="GidB"/>
    <property type="match status" value="1"/>
</dbReference>
<dbReference type="SUPFAM" id="SSF53335">
    <property type="entry name" value="S-adenosyl-L-methionine-dependent methyltransferases"/>
    <property type="match status" value="1"/>
</dbReference>
<feature type="chain" id="PRO_0000184310" description="Ribosomal RNA small subunit methyltransferase G">
    <location>
        <begin position="1"/>
        <end position="214"/>
    </location>
</feature>
<feature type="binding site" evidence="1">
    <location>
        <position position="81"/>
    </location>
    <ligand>
        <name>S-adenosyl-L-methionine</name>
        <dbReference type="ChEBI" id="CHEBI:59789"/>
    </ligand>
</feature>
<feature type="binding site" evidence="1">
    <location>
        <position position="86"/>
    </location>
    <ligand>
        <name>S-adenosyl-L-methionine</name>
        <dbReference type="ChEBI" id="CHEBI:59789"/>
    </ligand>
</feature>
<feature type="binding site" evidence="1">
    <location>
        <begin position="132"/>
        <end position="133"/>
    </location>
    <ligand>
        <name>S-adenosyl-L-methionine</name>
        <dbReference type="ChEBI" id="CHEBI:59789"/>
    </ligand>
</feature>
<feature type="binding site" evidence="1">
    <location>
        <position position="147"/>
    </location>
    <ligand>
        <name>S-adenosyl-L-methionine</name>
        <dbReference type="ChEBI" id="CHEBI:59789"/>
    </ligand>
</feature>
<proteinExistence type="inferred from homology"/>
<gene>
    <name evidence="1" type="primary">rsmG</name>
    <name type="ordered locus">Psyr_5131</name>
</gene>
<accession>Q4ZL14</accession>
<protein>
    <recommendedName>
        <fullName evidence="1">Ribosomal RNA small subunit methyltransferase G</fullName>
        <ecNumber evidence="1">2.1.1.170</ecNumber>
    </recommendedName>
    <alternativeName>
        <fullName evidence="1">16S rRNA 7-methylguanosine methyltransferase</fullName>
        <shortName evidence="1">16S rRNA m7G methyltransferase</shortName>
    </alternativeName>
</protein>
<reference key="1">
    <citation type="journal article" date="2005" name="Proc. Natl. Acad. Sci. U.S.A.">
        <title>Comparison of the complete genome sequences of Pseudomonas syringae pv. syringae B728a and pv. tomato DC3000.</title>
        <authorList>
            <person name="Feil H."/>
            <person name="Feil W.S."/>
            <person name="Chain P."/>
            <person name="Larimer F."/>
            <person name="Dibartolo G."/>
            <person name="Copeland A."/>
            <person name="Lykidis A."/>
            <person name="Trong S."/>
            <person name="Nolan M."/>
            <person name="Goltsman E."/>
            <person name="Thiel J."/>
            <person name="Malfatti S."/>
            <person name="Loper J.E."/>
            <person name="Lapidus A."/>
            <person name="Detter J.C."/>
            <person name="Land M."/>
            <person name="Richardson P.M."/>
            <person name="Kyrpides N.C."/>
            <person name="Ivanova N."/>
            <person name="Lindow S.E."/>
        </authorList>
    </citation>
    <scope>NUCLEOTIDE SEQUENCE [LARGE SCALE GENOMIC DNA]</scope>
    <source>
        <strain>B728a</strain>
    </source>
</reference>